<organism>
    <name type="scientific">Legionella pneumophila (strain Lens)</name>
    <dbReference type="NCBI Taxonomy" id="297245"/>
    <lineage>
        <taxon>Bacteria</taxon>
        <taxon>Pseudomonadati</taxon>
        <taxon>Pseudomonadota</taxon>
        <taxon>Gammaproteobacteria</taxon>
        <taxon>Legionellales</taxon>
        <taxon>Legionellaceae</taxon>
        <taxon>Legionella</taxon>
    </lineage>
</organism>
<keyword id="KW-0687">Ribonucleoprotein</keyword>
<keyword id="KW-0689">Ribosomal protein</keyword>
<keyword id="KW-0694">RNA-binding</keyword>
<keyword id="KW-0699">rRNA-binding</keyword>
<keyword id="KW-0820">tRNA-binding</keyword>
<dbReference type="EMBL" id="CR628337">
    <property type="protein sequence ID" value="CAH14607.1"/>
    <property type="molecule type" value="Genomic_DNA"/>
</dbReference>
<dbReference type="RefSeq" id="WP_010946085.1">
    <property type="nucleotide sequence ID" value="NC_006369.1"/>
</dbReference>
<dbReference type="SMR" id="Q5WZK5"/>
<dbReference type="GeneID" id="57034339"/>
<dbReference type="KEGG" id="lpf:lpl0376"/>
<dbReference type="LegioList" id="lpl0376"/>
<dbReference type="HOGENOM" id="CLU_078858_2_1_6"/>
<dbReference type="Proteomes" id="UP000002517">
    <property type="component" value="Chromosome"/>
</dbReference>
<dbReference type="GO" id="GO:0022625">
    <property type="term" value="C:cytosolic large ribosomal subunit"/>
    <property type="evidence" value="ECO:0007669"/>
    <property type="project" value="TreeGrafter"/>
</dbReference>
<dbReference type="GO" id="GO:0019843">
    <property type="term" value="F:rRNA binding"/>
    <property type="evidence" value="ECO:0007669"/>
    <property type="project" value="UniProtKB-UniRule"/>
</dbReference>
<dbReference type="GO" id="GO:0003735">
    <property type="term" value="F:structural constituent of ribosome"/>
    <property type="evidence" value="ECO:0007669"/>
    <property type="project" value="InterPro"/>
</dbReference>
<dbReference type="GO" id="GO:0000049">
    <property type="term" value="F:tRNA binding"/>
    <property type="evidence" value="ECO:0007669"/>
    <property type="project" value="UniProtKB-KW"/>
</dbReference>
<dbReference type="GO" id="GO:0006412">
    <property type="term" value="P:translation"/>
    <property type="evidence" value="ECO:0007669"/>
    <property type="project" value="UniProtKB-UniRule"/>
</dbReference>
<dbReference type="CDD" id="cd01433">
    <property type="entry name" value="Ribosomal_L16_L10e"/>
    <property type="match status" value="1"/>
</dbReference>
<dbReference type="FunFam" id="3.90.1170.10:FF:000001">
    <property type="entry name" value="50S ribosomal protein L16"/>
    <property type="match status" value="1"/>
</dbReference>
<dbReference type="Gene3D" id="3.90.1170.10">
    <property type="entry name" value="Ribosomal protein L10e/L16"/>
    <property type="match status" value="1"/>
</dbReference>
<dbReference type="HAMAP" id="MF_01342">
    <property type="entry name" value="Ribosomal_uL16"/>
    <property type="match status" value="1"/>
</dbReference>
<dbReference type="InterPro" id="IPR047873">
    <property type="entry name" value="Ribosomal_uL16"/>
</dbReference>
<dbReference type="InterPro" id="IPR000114">
    <property type="entry name" value="Ribosomal_uL16_bact-type"/>
</dbReference>
<dbReference type="InterPro" id="IPR020798">
    <property type="entry name" value="Ribosomal_uL16_CS"/>
</dbReference>
<dbReference type="InterPro" id="IPR016180">
    <property type="entry name" value="Ribosomal_uL16_dom"/>
</dbReference>
<dbReference type="InterPro" id="IPR036920">
    <property type="entry name" value="Ribosomal_uL16_sf"/>
</dbReference>
<dbReference type="NCBIfam" id="TIGR01164">
    <property type="entry name" value="rplP_bact"/>
    <property type="match status" value="1"/>
</dbReference>
<dbReference type="PANTHER" id="PTHR12220">
    <property type="entry name" value="50S/60S RIBOSOMAL PROTEIN L16"/>
    <property type="match status" value="1"/>
</dbReference>
<dbReference type="PANTHER" id="PTHR12220:SF13">
    <property type="entry name" value="LARGE RIBOSOMAL SUBUNIT PROTEIN UL16M"/>
    <property type="match status" value="1"/>
</dbReference>
<dbReference type="Pfam" id="PF00252">
    <property type="entry name" value="Ribosomal_L16"/>
    <property type="match status" value="1"/>
</dbReference>
<dbReference type="PRINTS" id="PR00060">
    <property type="entry name" value="RIBOSOMALL16"/>
</dbReference>
<dbReference type="SUPFAM" id="SSF54686">
    <property type="entry name" value="Ribosomal protein L16p/L10e"/>
    <property type="match status" value="1"/>
</dbReference>
<dbReference type="PROSITE" id="PS00586">
    <property type="entry name" value="RIBOSOMAL_L16_1"/>
    <property type="match status" value="1"/>
</dbReference>
<feature type="chain" id="PRO_0000062123" description="Large ribosomal subunit protein uL16">
    <location>
        <begin position="1"/>
        <end position="137"/>
    </location>
</feature>
<proteinExistence type="inferred from homology"/>
<protein>
    <recommendedName>
        <fullName evidence="1">Large ribosomal subunit protein uL16</fullName>
    </recommendedName>
    <alternativeName>
        <fullName evidence="2">50S ribosomal protein L16</fullName>
    </alternativeName>
</protein>
<accession>Q5WZK5</accession>
<comment type="function">
    <text evidence="1">Binds 23S rRNA and is also seen to make contacts with the A and possibly P site tRNAs.</text>
</comment>
<comment type="subunit">
    <text evidence="1">Part of the 50S ribosomal subunit.</text>
</comment>
<comment type="similarity">
    <text evidence="1">Belongs to the universal ribosomal protein uL16 family.</text>
</comment>
<gene>
    <name evidence="1" type="primary">rplP</name>
    <name type="ordered locus">lpl0376</name>
</gene>
<sequence>MLQPKRTKYRKQMKGRNRGLALRGSKISFGEFGLKAVERGRLTARQIEAARRAMTRHIKRGGKIWIRVFPDKPITQKPLEVRQGKGKGSVEYWVAQIQPGKVLFEMEGVSKELAMEAFDLAKAKLPFKVMFEERTVM</sequence>
<reference key="1">
    <citation type="journal article" date="2004" name="Nat. Genet.">
        <title>Evidence in the Legionella pneumophila genome for exploitation of host cell functions and high genome plasticity.</title>
        <authorList>
            <person name="Cazalet C."/>
            <person name="Rusniok C."/>
            <person name="Brueggemann H."/>
            <person name="Zidane N."/>
            <person name="Magnier A."/>
            <person name="Ma L."/>
            <person name="Tichit M."/>
            <person name="Jarraud S."/>
            <person name="Bouchier C."/>
            <person name="Vandenesch F."/>
            <person name="Kunst F."/>
            <person name="Etienne J."/>
            <person name="Glaser P."/>
            <person name="Buchrieser C."/>
        </authorList>
    </citation>
    <scope>NUCLEOTIDE SEQUENCE [LARGE SCALE GENOMIC DNA]</scope>
    <source>
        <strain>Lens</strain>
    </source>
</reference>
<name>RL16_LEGPL</name>
<evidence type="ECO:0000255" key="1">
    <source>
        <dbReference type="HAMAP-Rule" id="MF_01342"/>
    </source>
</evidence>
<evidence type="ECO:0000305" key="2"/>